<accession>Q32LP0</accession>
<feature type="chain" id="PRO_0000254653" description="Fermitin family homolog 3">
    <location>
        <begin position="1"/>
        <end position="665"/>
    </location>
</feature>
<feature type="domain" description="FERM">
    <location>
        <begin position="229"/>
        <end position="556"/>
    </location>
</feature>
<feature type="domain" description="PH" evidence="4">
    <location>
        <begin position="354"/>
        <end position="453"/>
    </location>
</feature>
<feature type="modified residue" description="Phosphotyrosine" evidence="2">
    <location>
        <position position="11"/>
    </location>
</feature>
<feature type="modified residue" description="Phosphotyrosine" evidence="2">
    <location>
        <position position="502"/>
    </location>
</feature>
<feature type="modified residue" description="Phosphothreonine" evidence="2">
    <location>
        <position position="589"/>
    </location>
</feature>
<organism>
    <name type="scientific">Bos taurus</name>
    <name type="common">Bovine</name>
    <dbReference type="NCBI Taxonomy" id="9913"/>
    <lineage>
        <taxon>Eukaryota</taxon>
        <taxon>Metazoa</taxon>
        <taxon>Chordata</taxon>
        <taxon>Craniata</taxon>
        <taxon>Vertebrata</taxon>
        <taxon>Euteleostomi</taxon>
        <taxon>Mammalia</taxon>
        <taxon>Eutheria</taxon>
        <taxon>Laurasiatheria</taxon>
        <taxon>Artiodactyla</taxon>
        <taxon>Ruminantia</taxon>
        <taxon>Pecora</taxon>
        <taxon>Bovidae</taxon>
        <taxon>Bovinae</taxon>
        <taxon>Bos</taxon>
    </lineage>
</organism>
<reference key="1">
    <citation type="submission" date="2005-11" db="EMBL/GenBank/DDBJ databases">
        <authorList>
            <consortium name="NIH - Mammalian Gene Collection (MGC) project"/>
        </authorList>
    </citation>
    <scope>NUCLEOTIDE SEQUENCE [LARGE SCALE MRNA]</scope>
    <source>
        <strain>Hereford</strain>
        <tissue>Thymus</tissue>
    </source>
</reference>
<evidence type="ECO:0000250" key="1"/>
<evidence type="ECO:0000250" key="2">
    <source>
        <dbReference type="UniProtKB" id="Q86UX7"/>
    </source>
</evidence>
<evidence type="ECO:0000250" key="3">
    <source>
        <dbReference type="UniProtKB" id="Q8K1B8"/>
    </source>
</evidence>
<evidence type="ECO:0000255" key="4">
    <source>
        <dbReference type="PROSITE-ProRule" id="PRU00145"/>
    </source>
</evidence>
<evidence type="ECO:0000305" key="5"/>
<comment type="function">
    <text evidence="2 3">Plays a central role in cell adhesion in hematopoietic cells. Acts by activating the integrin beta-1-3 (ITGB1, ITGB2 and ITGB3). Required for integrin-mediated platelet adhesion and leukocyte adhesion to endothelial cells. Required for activation of integrin beta-2 (ITGB2) in polymorphonuclear granulocytes (PMNs).</text>
</comment>
<comment type="subunit">
    <text evidence="1">Interacts with ITGB1, ITGB2 and ITGB3 (via cytoplasmic tails).</text>
</comment>
<comment type="subcellular location">
    <subcellularLocation>
        <location evidence="1">Cell projection</location>
        <location evidence="1">Podosome</location>
    </subcellularLocation>
    <text evidence="1">Present in the F-actin surrounding ring structure of podosomes, which are specialized adhesion structures of hematopoietic cells.</text>
</comment>
<comment type="domain">
    <text>The FERM domain is not correctly detected by PROSITE or Pfam techniques because it contains the insertion of a PH domain.</text>
</comment>
<comment type="similarity">
    <text evidence="5">Belongs to the kindlin family.</text>
</comment>
<dbReference type="EMBL" id="BC109488">
    <property type="protein sequence ID" value="AAI09489.1"/>
    <property type="molecule type" value="mRNA"/>
</dbReference>
<dbReference type="RefSeq" id="NP_001032695.1">
    <property type="nucleotide sequence ID" value="NM_001037606.1"/>
</dbReference>
<dbReference type="RefSeq" id="XP_010819463.1">
    <property type="nucleotide sequence ID" value="XM_010821161.1"/>
</dbReference>
<dbReference type="RefSeq" id="XP_015325547.1">
    <property type="nucleotide sequence ID" value="XM_015470061.1"/>
</dbReference>
<dbReference type="BMRB" id="Q32LP0"/>
<dbReference type="SMR" id="Q32LP0"/>
<dbReference type="FunCoup" id="Q32LP0">
    <property type="interactions" value="771"/>
</dbReference>
<dbReference type="STRING" id="9913.ENSBTAP00000055364"/>
<dbReference type="PaxDb" id="9913-ENSBTAP00000055364"/>
<dbReference type="PeptideAtlas" id="Q32LP0"/>
<dbReference type="GeneID" id="525159"/>
<dbReference type="KEGG" id="bta:525159"/>
<dbReference type="CTD" id="83706"/>
<dbReference type="VEuPathDB" id="HostDB:ENSBTAG00000045862"/>
<dbReference type="eggNOG" id="KOG3727">
    <property type="taxonomic scope" value="Eukaryota"/>
</dbReference>
<dbReference type="HOGENOM" id="CLU_065926_0_0_1"/>
<dbReference type="InParanoid" id="Q32LP0"/>
<dbReference type="OMA" id="RWLLQTH"/>
<dbReference type="OrthoDB" id="10057618at2759"/>
<dbReference type="Reactome" id="R-BTA-114608">
    <property type="pathway name" value="Platelet degranulation"/>
</dbReference>
<dbReference type="Proteomes" id="UP000009136">
    <property type="component" value="Chromosome 29"/>
</dbReference>
<dbReference type="Bgee" id="ENSBTAG00000045862">
    <property type="expression patterns" value="Expressed in monocyte and 101 other cell types or tissues"/>
</dbReference>
<dbReference type="GO" id="GO:0042995">
    <property type="term" value="C:cell projection"/>
    <property type="evidence" value="ECO:0007669"/>
    <property type="project" value="UniProtKB-KW"/>
</dbReference>
<dbReference type="GO" id="GO:0030055">
    <property type="term" value="C:cell-substrate junction"/>
    <property type="evidence" value="ECO:0000318"/>
    <property type="project" value="GO_Central"/>
</dbReference>
<dbReference type="GO" id="GO:0002102">
    <property type="term" value="C:podosome"/>
    <property type="evidence" value="ECO:0000250"/>
    <property type="project" value="UniProtKB"/>
</dbReference>
<dbReference type="GO" id="GO:0005178">
    <property type="term" value="F:integrin binding"/>
    <property type="evidence" value="ECO:0000250"/>
    <property type="project" value="UniProtKB"/>
</dbReference>
<dbReference type="GO" id="GO:0007160">
    <property type="term" value="P:cell-matrix adhesion"/>
    <property type="evidence" value="ECO:0000318"/>
    <property type="project" value="GO_Central"/>
</dbReference>
<dbReference type="GO" id="GO:0033622">
    <property type="term" value="P:integrin activation"/>
    <property type="evidence" value="ECO:0000250"/>
    <property type="project" value="UniProtKB"/>
</dbReference>
<dbReference type="GO" id="GO:0007229">
    <property type="term" value="P:integrin-mediated signaling pathway"/>
    <property type="evidence" value="ECO:0000250"/>
    <property type="project" value="UniProtKB"/>
</dbReference>
<dbReference type="GO" id="GO:0007159">
    <property type="term" value="P:leukocyte cell-cell adhesion"/>
    <property type="evidence" value="ECO:0000250"/>
    <property type="project" value="UniProtKB"/>
</dbReference>
<dbReference type="GO" id="GO:0070527">
    <property type="term" value="P:platelet aggregation"/>
    <property type="evidence" value="ECO:0000250"/>
    <property type="project" value="UniProtKB"/>
</dbReference>
<dbReference type="GO" id="GO:0030335">
    <property type="term" value="P:positive regulation of cell migration"/>
    <property type="evidence" value="ECO:0000250"/>
    <property type="project" value="UniProtKB"/>
</dbReference>
<dbReference type="GO" id="GO:0033632">
    <property type="term" value="P:regulation of cell-cell adhesion mediated by integrin"/>
    <property type="evidence" value="ECO:0000250"/>
    <property type="project" value="UniProtKB"/>
</dbReference>
<dbReference type="GO" id="GO:0034446">
    <property type="term" value="P:substrate adhesion-dependent cell spreading"/>
    <property type="evidence" value="ECO:0000250"/>
    <property type="project" value="UniProtKB"/>
</dbReference>
<dbReference type="CDD" id="cd14473">
    <property type="entry name" value="FERM_B-lobe"/>
    <property type="match status" value="1"/>
</dbReference>
<dbReference type="CDD" id="cd13205">
    <property type="entry name" value="FERM_C_fermitin"/>
    <property type="match status" value="1"/>
</dbReference>
<dbReference type="CDD" id="cd17185">
    <property type="entry name" value="FERM_F1_KIND3"/>
    <property type="match status" value="1"/>
</dbReference>
<dbReference type="CDD" id="cd01237">
    <property type="entry name" value="PH_fermitin"/>
    <property type="match status" value="1"/>
</dbReference>
<dbReference type="FunFam" id="2.30.29.30:FF:000037">
    <property type="entry name" value="Fermitin family homolog 2"/>
    <property type="match status" value="1"/>
</dbReference>
<dbReference type="FunFam" id="2.30.29.30:FF:000057">
    <property type="entry name" value="Fermitin family homolog 2 (Drosophila)"/>
    <property type="match status" value="1"/>
</dbReference>
<dbReference type="FunFam" id="3.10.20.90:FF:000035">
    <property type="entry name" value="Fermitin family homolog 2 (Drosophila)"/>
    <property type="match status" value="1"/>
</dbReference>
<dbReference type="Gene3D" id="3.10.20.90">
    <property type="entry name" value="Phosphatidylinositol 3-kinase Catalytic Subunit, Chain A, domain 1"/>
    <property type="match status" value="2"/>
</dbReference>
<dbReference type="Gene3D" id="2.30.29.30">
    <property type="entry name" value="Pleckstrin-homology domain (PH domain)/Phosphotyrosine-binding domain (PTB)"/>
    <property type="match status" value="2"/>
</dbReference>
<dbReference type="InterPro" id="IPR019749">
    <property type="entry name" value="Band_41_domain"/>
</dbReference>
<dbReference type="InterPro" id="IPR035963">
    <property type="entry name" value="FERM_2"/>
</dbReference>
<dbReference type="InterPro" id="IPR019748">
    <property type="entry name" value="FERM_central"/>
</dbReference>
<dbReference type="InterPro" id="IPR037843">
    <property type="entry name" value="Kindlin/fermitin"/>
</dbReference>
<dbReference type="InterPro" id="IPR040790">
    <property type="entry name" value="Kindlin_2_N"/>
</dbReference>
<dbReference type="InterPro" id="IPR011993">
    <property type="entry name" value="PH-like_dom_sf"/>
</dbReference>
<dbReference type="InterPro" id="IPR001849">
    <property type="entry name" value="PH_domain"/>
</dbReference>
<dbReference type="InterPro" id="IPR037837">
    <property type="entry name" value="PH_Kindlin/fermitin"/>
</dbReference>
<dbReference type="PANTHER" id="PTHR16160">
    <property type="entry name" value="FERMITIN 2-RELATED"/>
    <property type="match status" value="1"/>
</dbReference>
<dbReference type="PANTHER" id="PTHR16160:SF1">
    <property type="entry name" value="FERMITIN FAMILY HOMOLOG 3"/>
    <property type="match status" value="1"/>
</dbReference>
<dbReference type="Pfam" id="PF00373">
    <property type="entry name" value="FERM_M"/>
    <property type="match status" value="1"/>
</dbReference>
<dbReference type="Pfam" id="PF18124">
    <property type="entry name" value="Kindlin_2_N"/>
    <property type="match status" value="1"/>
</dbReference>
<dbReference type="Pfam" id="PF00169">
    <property type="entry name" value="PH"/>
    <property type="match status" value="1"/>
</dbReference>
<dbReference type="SMART" id="SM00295">
    <property type="entry name" value="B41"/>
    <property type="match status" value="1"/>
</dbReference>
<dbReference type="SMART" id="SM00233">
    <property type="entry name" value="PH"/>
    <property type="match status" value="1"/>
</dbReference>
<dbReference type="SUPFAM" id="SSF50729">
    <property type="entry name" value="PH domain-like"/>
    <property type="match status" value="2"/>
</dbReference>
<dbReference type="SUPFAM" id="SSF47031">
    <property type="entry name" value="Second domain of FERM"/>
    <property type="match status" value="2"/>
</dbReference>
<dbReference type="PROSITE" id="PS00661">
    <property type="entry name" value="FERM_2"/>
    <property type="match status" value="1"/>
</dbReference>
<dbReference type="PROSITE" id="PS50003">
    <property type="entry name" value="PH_DOMAIN"/>
    <property type="match status" value="1"/>
</dbReference>
<proteinExistence type="evidence at transcript level"/>
<gene>
    <name type="primary">FERMT3</name>
    <name type="synonym">KIND3</name>
    <name type="synonym">URP2</name>
</gene>
<protein>
    <recommendedName>
        <fullName>Fermitin family homolog 3</fullName>
    </recommendedName>
    <alternativeName>
        <fullName>Kindlin-3</fullName>
    </alternativeName>
    <alternativeName>
        <fullName>Unc-112-related protein 2</fullName>
    </alternativeName>
</protein>
<sequence length="665" mass="75783">MAGMKTATGDYIDSSWELRVFIGEEDPEAESLTLRVTGESHIGGVLLKIVEEIKRKQDWSDHAIWWEQKRQWLLQTHWTLDKYGILADARLFFGPQHRPVILRLPNRRALRLRASFSQPLFQAMVAICRLLSIRHPEEMSLLRAPEKEKKKKKEKEPEEEVYDLTKVVLVGGVAPASFRGMPAHFSDSAQTEACYHMLSRPQPPPDPLLLQRLPRPSSLLDKTQLHSRWLDSSRCLMQQGIKAGDTLWLRFKYYSFFDLDPKTDPVRLTQLYEQARWDLLLEEIDCTEEEMMVFAALQYHINKLSQSGEVDEPAGTDSGLDDLDLALSNLEVKLEGSAPTDMLDSLTTIPELKDHLRIFRPRKLTLKGYRQHWVVFKETTLSYYKSQDEAPGEPIQQLNLKGCEVVPDVNVSGQKFCIKLLVPSPEGMSEIYLRCQDEQQYARWMAGCRLASKGRTMADSSYSSEVQAILAFLSLQRTGGGGGGSGNHPQGPDASAEGLNPYGLVAPRFQRKFKAKQLTPRILEAHQNVAQLSLSEAQLRFIQAWQSLPDFGISYVVVRFKGSRKDEILGIANNRLIRIDLSVGDVVKTWRFSNMRQWNVNWDIRQVAIEFDEHINVAFSCVSASCRIVHEYIGGYIFLSTRERARGEELDEDLFLQLTGGHEAF</sequence>
<keyword id="KW-0130">Cell adhesion</keyword>
<keyword id="KW-0965">Cell junction</keyword>
<keyword id="KW-0966">Cell projection</keyword>
<keyword id="KW-0597">Phosphoprotein</keyword>
<keyword id="KW-1185">Reference proteome</keyword>
<name>URP2_BOVIN</name>